<accession>B2IK56</accession>
<protein>
    <recommendedName>
        <fullName evidence="1">DNA-directed RNA polymerase subunit beta'</fullName>
        <shortName evidence="1">RNAP subunit beta'</shortName>
        <ecNumber evidence="1">2.7.7.6</ecNumber>
    </recommendedName>
    <alternativeName>
        <fullName evidence="1">RNA polymerase subunit beta'</fullName>
    </alternativeName>
    <alternativeName>
        <fullName evidence="1">Transcriptase subunit beta'</fullName>
    </alternativeName>
</protein>
<feature type="chain" id="PRO_0000353298" description="DNA-directed RNA polymerase subunit beta'">
    <location>
        <begin position="1"/>
        <end position="1394"/>
    </location>
</feature>
<feature type="binding site" evidence="1">
    <location>
        <position position="71"/>
    </location>
    <ligand>
        <name>Zn(2+)</name>
        <dbReference type="ChEBI" id="CHEBI:29105"/>
        <label>1</label>
    </ligand>
</feature>
<feature type="binding site" evidence="1">
    <location>
        <position position="73"/>
    </location>
    <ligand>
        <name>Zn(2+)</name>
        <dbReference type="ChEBI" id="CHEBI:29105"/>
        <label>1</label>
    </ligand>
</feature>
<feature type="binding site" evidence="1">
    <location>
        <position position="86"/>
    </location>
    <ligand>
        <name>Zn(2+)</name>
        <dbReference type="ChEBI" id="CHEBI:29105"/>
        <label>1</label>
    </ligand>
</feature>
<feature type="binding site" evidence="1">
    <location>
        <position position="89"/>
    </location>
    <ligand>
        <name>Zn(2+)</name>
        <dbReference type="ChEBI" id="CHEBI:29105"/>
        <label>1</label>
    </ligand>
</feature>
<feature type="binding site" evidence="1">
    <location>
        <position position="462"/>
    </location>
    <ligand>
        <name>Mg(2+)</name>
        <dbReference type="ChEBI" id="CHEBI:18420"/>
    </ligand>
</feature>
<feature type="binding site" evidence="1">
    <location>
        <position position="464"/>
    </location>
    <ligand>
        <name>Mg(2+)</name>
        <dbReference type="ChEBI" id="CHEBI:18420"/>
    </ligand>
</feature>
<feature type="binding site" evidence="1">
    <location>
        <position position="466"/>
    </location>
    <ligand>
        <name>Mg(2+)</name>
        <dbReference type="ChEBI" id="CHEBI:18420"/>
    </ligand>
</feature>
<feature type="binding site" evidence="1">
    <location>
        <position position="810"/>
    </location>
    <ligand>
        <name>Zn(2+)</name>
        <dbReference type="ChEBI" id="CHEBI:29105"/>
        <label>2</label>
    </ligand>
</feature>
<feature type="binding site" evidence="1">
    <location>
        <position position="883"/>
    </location>
    <ligand>
        <name>Zn(2+)</name>
        <dbReference type="ChEBI" id="CHEBI:29105"/>
        <label>2</label>
    </ligand>
</feature>
<feature type="binding site" evidence="1">
    <location>
        <position position="890"/>
    </location>
    <ligand>
        <name>Zn(2+)</name>
        <dbReference type="ChEBI" id="CHEBI:29105"/>
        <label>2</label>
    </ligand>
</feature>
<feature type="binding site" evidence="1">
    <location>
        <position position="893"/>
    </location>
    <ligand>
        <name>Zn(2+)</name>
        <dbReference type="ChEBI" id="CHEBI:29105"/>
        <label>2</label>
    </ligand>
</feature>
<proteinExistence type="inferred from homology"/>
<name>RPOC_BEII9</name>
<keyword id="KW-0240">DNA-directed RNA polymerase</keyword>
<keyword id="KW-0460">Magnesium</keyword>
<keyword id="KW-0479">Metal-binding</keyword>
<keyword id="KW-0548">Nucleotidyltransferase</keyword>
<keyword id="KW-1185">Reference proteome</keyword>
<keyword id="KW-0804">Transcription</keyword>
<keyword id="KW-0808">Transferase</keyword>
<keyword id="KW-0862">Zinc</keyword>
<comment type="function">
    <text evidence="1">DNA-dependent RNA polymerase catalyzes the transcription of DNA into RNA using the four ribonucleoside triphosphates as substrates.</text>
</comment>
<comment type="catalytic activity">
    <reaction evidence="1">
        <text>RNA(n) + a ribonucleoside 5'-triphosphate = RNA(n+1) + diphosphate</text>
        <dbReference type="Rhea" id="RHEA:21248"/>
        <dbReference type="Rhea" id="RHEA-COMP:14527"/>
        <dbReference type="Rhea" id="RHEA-COMP:17342"/>
        <dbReference type="ChEBI" id="CHEBI:33019"/>
        <dbReference type="ChEBI" id="CHEBI:61557"/>
        <dbReference type="ChEBI" id="CHEBI:140395"/>
        <dbReference type="EC" id="2.7.7.6"/>
    </reaction>
</comment>
<comment type="cofactor">
    <cofactor evidence="1">
        <name>Mg(2+)</name>
        <dbReference type="ChEBI" id="CHEBI:18420"/>
    </cofactor>
    <text evidence="1">Binds 1 Mg(2+) ion per subunit.</text>
</comment>
<comment type="cofactor">
    <cofactor evidence="1">
        <name>Zn(2+)</name>
        <dbReference type="ChEBI" id="CHEBI:29105"/>
    </cofactor>
    <text evidence="1">Binds 2 Zn(2+) ions per subunit.</text>
</comment>
<comment type="subunit">
    <text evidence="1">The RNAP catalytic core consists of 2 alpha, 1 beta, 1 beta' and 1 omega subunit. When a sigma factor is associated with the core the holoenzyme is formed, which can initiate transcription.</text>
</comment>
<comment type="similarity">
    <text evidence="1">Belongs to the RNA polymerase beta' chain family.</text>
</comment>
<evidence type="ECO:0000255" key="1">
    <source>
        <dbReference type="HAMAP-Rule" id="MF_01322"/>
    </source>
</evidence>
<organism>
    <name type="scientific">Beijerinckia indica subsp. indica (strain ATCC 9039 / DSM 1715 / NCIMB 8712)</name>
    <dbReference type="NCBI Taxonomy" id="395963"/>
    <lineage>
        <taxon>Bacteria</taxon>
        <taxon>Pseudomonadati</taxon>
        <taxon>Pseudomonadota</taxon>
        <taxon>Alphaproteobacteria</taxon>
        <taxon>Hyphomicrobiales</taxon>
        <taxon>Beijerinckiaceae</taxon>
        <taxon>Beijerinckia</taxon>
    </lineage>
</organism>
<sequence>MNQEVMNLFNPVVQPQAFDQIQISIASPEKILSWSYGEIKKPETINYRTFKPERDGLFCARIFGPIKDYECLCGKYKRMKYKGVICEKCGVEVTLSRVRRERMGHISLAAPVAHIWFLKSLPSRIGLLLDMTLKDLERILYFESYIVLDPGLTPLKDRQLLNEEDYLKAQDEYGQDSFTALIGAEAIREILRNMDLPKIAEDLKVEIAESTTELKPKKLAKRLKIIEAFMHSGNKPEWMILTEVPVIPPDLRPLVPLDGGRFATSDLNDLYRRVINRNNRLKRLIELRAPDIIVRNEKRMLQEAVDALFDNGRRGRVITGANKRPLKSLADMLKGKQGRFRQNLLGKRVDYSGRSVIVVGPELKLHQCGLPKKMALELFKPFIYSRLDAKGFSATVKQAKKLVEKEKPEVWDILDEVIREHPVMLNRAPTLHRLGIQAFEPKLIEGKAIQLHPLVCAAFNADFDGDQMAVHVPLSLEAQLEARVLMMSTNNILHPANGQPIIVPSQDIVLGLYYVTLMRDGEPGQGMMFANMGEIEHALNAKAITLHTKIKGRAWTFDENGEKVSKIFDTTPGRLILGQLLPHHVKIPFDVVNKLMTKKEISNMIDIVYRNCGQKETVIFCDRIMALGFREAFKAGISFGKDDMVVPETKPRIIEETSALAKEYEQQYNDGLITQVEKYNKVVDAWGKCSVKLADEMMARISAVQKDDDGRDKPINSIYMMSHSGARGSPTQMKQLAAMRGLMAKPSGEIIETPIISNFKEGLTVLEYFNSTHGARKGLADTALKTANSGYLTRRLVDVAQDAIITIPDCHSENGIRMRAIIDAGQIVASLETRILGRTAAEDLREADGTIIVPAGEMIEEIHVGRINAAGIQEVKIRSVLTCEAKNGVCAKCYGRDLARGTPVNMGEAVGVIAAQSIGEPGTQLTMRTFHIGGAAQIADQSFIESNFEGTVKIRNRHVARNTDGDLMVMARNVAVVIDGPDGTELAVHRVQYGARLKVDEGDKIKRGQRIAEWDPYTRPILTEIDGTIGFEDLVEGASMTETIDEATGIAKRMVIDWRLNQRSASLKPAMVIKTADGKVGKLQRGGEARYMLPVDSIIGVDPGGSVKAGDVIARISMESAKTRDITGGLPRVAELFEARRPKDHAIIAEASGTVQFGRDYKNKTRISIVPHEDGAEPIEYLIPKGKHIYLQDGDVVEKGDYIVDGNPAPHDILAIKGVEELAAYLVNEIQEVYRLQGVSINDKHIEVIVRQMLQKVDIVDSGDTDFLPGEQVDQLEFEEANIQAVENGGKPATGTPVLLGITKASLQTRSFISAASFQETTRVLTEAAVNGKADTLEGLKENVIVGRLIPAGTGAAMAKLRRVAVQRDELILAQKAETSEAPLVPIPHLPAAE</sequence>
<reference key="1">
    <citation type="journal article" date="2010" name="J. Bacteriol.">
        <title>Complete genome sequence of Beijerinckia indica subsp. indica.</title>
        <authorList>
            <person name="Tamas I."/>
            <person name="Dedysh S.N."/>
            <person name="Liesack W."/>
            <person name="Stott M.B."/>
            <person name="Alam M."/>
            <person name="Murrell J.C."/>
            <person name="Dunfield P.F."/>
        </authorList>
    </citation>
    <scope>NUCLEOTIDE SEQUENCE [LARGE SCALE GENOMIC DNA]</scope>
    <source>
        <strain>ATCC 9039 / DSM 1715 / NCIMB 8712</strain>
    </source>
</reference>
<gene>
    <name evidence="1" type="primary">rpoC</name>
    <name type="ordered locus">Bind_1348</name>
</gene>
<dbReference type="EC" id="2.7.7.6" evidence="1"/>
<dbReference type="EMBL" id="CP001016">
    <property type="protein sequence ID" value="ACB94988.1"/>
    <property type="molecule type" value="Genomic_DNA"/>
</dbReference>
<dbReference type="RefSeq" id="WP_012384345.1">
    <property type="nucleotide sequence ID" value="NC_010581.1"/>
</dbReference>
<dbReference type="SMR" id="B2IK56"/>
<dbReference type="STRING" id="395963.Bind_1348"/>
<dbReference type="KEGG" id="bid:Bind_1348"/>
<dbReference type="eggNOG" id="COG0086">
    <property type="taxonomic scope" value="Bacteria"/>
</dbReference>
<dbReference type="HOGENOM" id="CLU_000524_3_1_5"/>
<dbReference type="OrthoDB" id="9815296at2"/>
<dbReference type="Proteomes" id="UP000001695">
    <property type="component" value="Chromosome"/>
</dbReference>
<dbReference type="GO" id="GO:0000428">
    <property type="term" value="C:DNA-directed RNA polymerase complex"/>
    <property type="evidence" value="ECO:0007669"/>
    <property type="project" value="UniProtKB-KW"/>
</dbReference>
<dbReference type="GO" id="GO:0003677">
    <property type="term" value="F:DNA binding"/>
    <property type="evidence" value="ECO:0007669"/>
    <property type="project" value="UniProtKB-UniRule"/>
</dbReference>
<dbReference type="GO" id="GO:0003899">
    <property type="term" value="F:DNA-directed RNA polymerase activity"/>
    <property type="evidence" value="ECO:0007669"/>
    <property type="project" value="UniProtKB-UniRule"/>
</dbReference>
<dbReference type="GO" id="GO:0000287">
    <property type="term" value="F:magnesium ion binding"/>
    <property type="evidence" value="ECO:0007669"/>
    <property type="project" value="UniProtKB-UniRule"/>
</dbReference>
<dbReference type="GO" id="GO:0008270">
    <property type="term" value="F:zinc ion binding"/>
    <property type="evidence" value="ECO:0007669"/>
    <property type="project" value="UniProtKB-UniRule"/>
</dbReference>
<dbReference type="GO" id="GO:0006351">
    <property type="term" value="P:DNA-templated transcription"/>
    <property type="evidence" value="ECO:0007669"/>
    <property type="project" value="UniProtKB-UniRule"/>
</dbReference>
<dbReference type="CDD" id="cd02655">
    <property type="entry name" value="RNAP_beta'_C"/>
    <property type="match status" value="1"/>
</dbReference>
<dbReference type="CDD" id="cd01609">
    <property type="entry name" value="RNAP_beta'_N"/>
    <property type="match status" value="1"/>
</dbReference>
<dbReference type="FunFam" id="1.10.150.390:FF:000002">
    <property type="entry name" value="DNA-directed RNA polymerase subunit beta"/>
    <property type="match status" value="1"/>
</dbReference>
<dbReference type="Gene3D" id="1.10.132.30">
    <property type="match status" value="1"/>
</dbReference>
<dbReference type="Gene3D" id="1.10.150.390">
    <property type="match status" value="1"/>
</dbReference>
<dbReference type="Gene3D" id="1.10.1790.20">
    <property type="match status" value="1"/>
</dbReference>
<dbReference type="Gene3D" id="1.10.40.90">
    <property type="match status" value="1"/>
</dbReference>
<dbReference type="Gene3D" id="2.40.40.20">
    <property type="match status" value="1"/>
</dbReference>
<dbReference type="Gene3D" id="2.40.50.100">
    <property type="match status" value="3"/>
</dbReference>
<dbReference type="Gene3D" id="4.10.860.120">
    <property type="entry name" value="RNA polymerase II, clamp domain"/>
    <property type="match status" value="1"/>
</dbReference>
<dbReference type="Gene3D" id="1.10.274.100">
    <property type="entry name" value="RNA polymerase Rpb1, domain 3"/>
    <property type="match status" value="1"/>
</dbReference>
<dbReference type="HAMAP" id="MF_01322">
    <property type="entry name" value="RNApol_bact_RpoC"/>
    <property type="match status" value="1"/>
</dbReference>
<dbReference type="InterPro" id="IPR045867">
    <property type="entry name" value="DNA-dir_RpoC_beta_prime"/>
</dbReference>
<dbReference type="InterPro" id="IPR012754">
    <property type="entry name" value="DNA-dir_RpoC_beta_prime_bact"/>
</dbReference>
<dbReference type="InterPro" id="IPR000722">
    <property type="entry name" value="RNA_pol_asu"/>
</dbReference>
<dbReference type="InterPro" id="IPR006592">
    <property type="entry name" value="RNA_pol_N"/>
</dbReference>
<dbReference type="InterPro" id="IPR007080">
    <property type="entry name" value="RNA_pol_Rpb1_1"/>
</dbReference>
<dbReference type="InterPro" id="IPR007066">
    <property type="entry name" value="RNA_pol_Rpb1_3"/>
</dbReference>
<dbReference type="InterPro" id="IPR042102">
    <property type="entry name" value="RNA_pol_Rpb1_3_sf"/>
</dbReference>
<dbReference type="InterPro" id="IPR007083">
    <property type="entry name" value="RNA_pol_Rpb1_4"/>
</dbReference>
<dbReference type="InterPro" id="IPR007081">
    <property type="entry name" value="RNA_pol_Rpb1_5"/>
</dbReference>
<dbReference type="InterPro" id="IPR044893">
    <property type="entry name" value="RNA_pol_Rpb1_clamp_domain"/>
</dbReference>
<dbReference type="InterPro" id="IPR038120">
    <property type="entry name" value="Rpb1_funnel_sf"/>
</dbReference>
<dbReference type="NCBIfam" id="TIGR02386">
    <property type="entry name" value="rpoC_TIGR"/>
    <property type="match status" value="1"/>
</dbReference>
<dbReference type="PANTHER" id="PTHR19376">
    <property type="entry name" value="DNA-DIRECTED RNA POLYMERASE"/>
    <property type="match status" value="1"/>
</dbReference>
<dbReference type="PANTHER" id="PTHR19376:SF54">
    <property type="entry name" value="DNA-DIRECTED RNA POLYMERASE SUBUNIT BETA"/>
    <property type="match status" value="1"/>
</dbReference>
<dbReference type="Pfam" id="PF04997">
    <property type="entry name" value="RNA_pol_Rpb1_1"/>
    <property type="match status" value="1"/>
</dbReference>
<dbReference type="Pfam" id="PF00623">
    <property type="entry name" value="RNA_pol_Rpb1_2"/>
    <property type="match status" value="1"/>
</dbReference>
<dbReference type="Pfam" id="PF04983">
    <property type="entry name" value="RNA_pol_Rpb1_3"/>
    <property type="match status" value="1"/>
</dbReference>
<dbReference type="Pfam" id="PF05000">
    <property type="entry name" value="RNA_pol_Rpb1_4"/>
    <property type="match status" value="1"/>
</dbReference>
<dbReference type="Pfam" id="PF04998">
    <property type="entry name" value="RNA_pol_Rpb1_5"/>
    <property type="match status" value="1"/>
</dbReference>
<dbReference type="SMART" id="SM00663">
    <property type="entry name" value="RPOLA_N"/>
    <property type="match status" value="1"/>
</dbReference>
<dbReference type="SUPFAM" id="SSF64484">
    <property type="entry name" value="beta and beta-prime subunits of DNA dependent RNA-polymerase"/>
    <property type="match status" value="1"/>
</dbReference>